<reference key="1">
    <citation type="submission" date="2007-09" db="EMBL/GenBank/DDBJ databases">
        <title>Complete genome sequence of Rickettsia akari.</title>
        <authorList>
            <person name="Madan A."/>
            <person name="Fahey J."/>
            <person name="Helton E."/>
            <person name="Ketteman M."/>
            <person name="Madan A."/>
            <person name="Rodrigues S."/>
            <person name="Sanchez A."/>
            <person name="Whiting M."/>
            <person name="Dasch G."/>
            <person name="Eremeeva M."/>
        </authorList>
    </citation>
    <scope>NUCLEOTIDE SEQUENCE [LARGE SCALE GENOMIC DNA]</scope>
    <source>
        <strain>Hartford</strain>
    </source>
</reference>
<sequence length="627" mass="67745">MGKVIGIDLGTTNSCVAVMEGKEPKVIENAEGERTTPSIIAFANGEKLVGQSAKRQAVTNPSNTIYAVKRLIGRNFTDPMVKKDQDIVPYNIVKADNGDAWVEADSNKYSPSQISAFILQKMKETAENYLGEKVTQAVITVPAYFNDAQRQATKDAGKIAGLEVLRIINEPTAAALAYGFDKAASKTIAVYDLGGGTFDVSILEIGDGVFEVKSTNGDTFLGGEDFDTRILNHLIDVFKKESGIDLRNDPLALQRLKEAAEKAKKELSSAVTTDINLPYITADSTGPKHLNIKFTRAEFEKLVDDLIEKTVEPCITALKDAGLKASDIQEVVLVGGMTRMPKVQEAVKKFFGREPHKGVNPDEVVALGAAIQGGVLNKEVTDILLLDVTPLSLGIETLGGVFTRLIDRNTTIPTKKSQVFSTADDNQHAVTIRVFQGEREMAASNKLLGQFNLEGIPPAPRGVPQIEVTFDIDVNGIVHVSAKDKASGKEQKVTIQASGGLSDAEIEQMVKDAEQNAYEDKKRKELIEAKNAADSLVYSTEKSLTEYGDKLSSEDKGAAEEALSALKAVLESEDAALIKEKTERLTAASMKIGEAMYKAQSENQPAGENTANDDKVVDADFQDVAKK</sequence>
<gene>
    <name evidence="1" type="primary">dnaK</name>
    <name type="ordered locus">A1C_01330</name>
</gene>
<feature type="chain" id="PRO_1000059650" description="Chaperone protein DnaK">
    <location>
        <begin position="1"/>
        <end position="627"/>
    </location>
</feature>
<feature type="region of interest" description="Disordered" evidence="2">
    <location>
        <begin position="598"/>
        <end position="627"/>
    </location>
</feature>
<feature type="compositionally biased region" description="Polar residues" evidence="2">
    <location>
        <begin position="600"/>
        <end position="610"/>
    </location>
</feature>
<feature type="compositionally biased region" description="Basic and acidic residues" evidence="2">
    <location>
        <begin position="612"/>
        <end position="627"/>
    </location>
</feature>
<feature type="modified residue" description="Phosphothreonine; by autocatalysis" evidence="1">
    <location>
        <position position="197"/>
    </location>
</feature>
<organism>
    <name type="scientific">Rickettsia akari (strain Hartford)</name>
    <dbReference type="NCBI Taxonomy" id="293614"/>
    <lineage>
        <taxon>Bacteria</taxon>
        <taxon>Pseudomonadati</taxon>
        <taxon>Pseudomonadota</taxon>
        <taxon>Alphaproteobacteria</taxon>
        <taxon>Rickettsiales</taxon>
        <taxon>Rickettsiaceae</taxon>
        <taxon>Rickettsieae</taxon>
        <taxon>Rickettsia</taxon>
        <taxon>spotted fever group</taxon>
    </lineage>
</organism>
<dbReference type="EMBL" id="CP000847">
    <property type="protein sequence ID" value="ABV74584.1"/>
    <property type="molecule type" value="Genomic_DNA"/>
</dbReference>
<dbReference type="RefSeq" id="WP_012013454.1">
    <property type="nucleotide sequence ID" value="NC_009881.1"/>
</dbReference>
<dbReference type="SMR" id="A8GMF9"/>
<dbReference type="STRING" id="293614.A1C_01330"/>
<dbReference type="KEGG" id="rak:A1C_01330"/>
<dbReference type="eggNOG" id="COG0443">
    <property type="taxonomic scope" value="Bacteria"/>
</dbReference>
<dbReference type="HOGENOM" id="CLU_005965_2_1_5"/>
<dbReference type="Proteomes" id="UP000006830">
    <property type="component" value="Chromosome"/>
</dbReference>
<dbReference type="GO" id="GO:0005524">
    <property type="term" value="F:ATP binding"/>
    <property type="evidence" value="ECO:0007669"/>
    <property type="project" value="UniProtKB-UniRule"/>
</dbReference>
<dbReference type="GO" id="GO:0140662">
    <property type="term" value="F:ATP-dependent protein folding chaperone"/>
    <property type="evidence" value="ECO:0007669"/>
    <property type="project" value="InterPro"/>
</dbReference>
<dbReference type="GO" id="GO:0051082">
    <property type="term" value="F:unfolded protein binding"/>
    <property type="evidence" value="ECO:0007669"/>
    <property type="project" value="InterPro"/>
</dbReference>
<dbReference type="CDD" id="cd11733">
    <property type="entry name" value="ASKHA_NBD_HSP70_HSPA9"/>
    <property type="match status" value="1"/>
</dbReference>
<dbReference type="FunFam" id="2.60.34.10:FF:000014">
    <property type="entry name" value="Chaperone protein DnaK HSP70"/>
    <property type="match status" value="1"/>
</dbReference>
<dbReference type="FunFam" id="3.30.420.40:FF:000020">
    <property type="entry name" value="Chaperone protein HscA homolog"/>
    <property type="match status" value="1"/>
</dbReference>
<dbReference type="FunFam" id="1.20.1270.10:FF:000001">
    <property type="entry name" value="Molecular chaperone DnaK"/>
    <property type="match status" value="1"/>
</dbReference>
<dbReference type="FunFam" id="3.30.420.40:FF:000004">
    <property type="entry name" value="Molecular chaperone DnaK"/>
    <property type="match status" value="1"/>
</dbReference>
<dbReference type="FunFam" id="3.90.640.10:FF:000003">
    <property type="entry name" value="Molecular chaperone DnaK"/>
    <property type="match status" value="1"/>
</dbReference>
<dbReference type="Gene3D" id="1.20.1270.10">
    <property type="match status" value="1"/>
</dbReference>
<dbReference type="Gene3D" id="3.30.420.40">
    <property type="match status" value="2"/>
</dbReference>
<dbReference type="Gene3D" id="3.90.640.10">
    <property type="entry name" value="Actin, Chain A, domain 4"/>
    <property type="match status" value="1"/>
</dbReference>
<dbReference type="Gene3D" id="2.60.34.10">
    <property type="entry name" value="Substrate Binding Domain Of DNAk, Chain A, domain 1"/>
    <property type="match status" value="1"/>
</dbReference>
<dbReference type="HAMAP" id="MF_00332">
    <property type="entry name" value="DnaK"/>
    <property type="match status" value="1"/>
</dbReference>
<dbReference type="InterPro" id="IPR043129">
    <property type="entry name" value="ATPase_NBD"/>
</dbReference>
<dbReference type="InterPro" id="IPR012725">
    <property type="entry name" value="Chaperone_DnaK"/>
</dbReference>
<dbReference type="InterPro" id="IPR018181">
    <property type="entry name" value="Heat_shock_70_CS"/>
</dbReference>
<dbReference type="InterPro" id="IPR029048">
    <property type="entry name" value="HSP70_C_sf"/>
</dbReference>
<dbReference type="InterPro" id="IPR029047">
    <property type="entry name" value="HSP70_peptide-bd_sf"/>
</dbReference>
<dbReference type="InterPro" id="IPR013126">
    <property type="entry name" value="Hsp_70_fam"/>
</dbReference>
<dbReference type="NCBIfam" id="NF001413">
    <property type="entry name" value="PRK00290.1"/>
    <property type="match status" value="1"/>
</dbReference>
<dbReference type="NCBIfam" id="NF003520">
    <property type="entry name" value="PRK05183.1"/>
    <property type="match status" value="1"/>
</dbReference>
<dbReference type="NCBIfam" id="TIGR02350">
    <property type="entry name" value="prok_dnaK"/>
    <property type="match status" value="1"/>
</dbReference>
<dbReference type="PANTHER" id="PTHR19375">
    <property type="entry name" value="HEAT SHOCK PROTEIN 70KDA"/>
    <property type="match status" value="1"/>
</dbReference>
<dbReference type="Pfam" id="PF00012">
    <property type="entry name" value="HSP70"/>
    <property type="match status" value="1"/>
</dbReference>
<dbReference type="PRINTS" id="PR00301">
    <property type="entry name" value="HEATSHOCK70"/>
</dbReference>
<dbReference type="SUPFAM" id="SSF53067">
    <property type="entry name" value="Actin-like ATPase domain"/>
    <property type="match status" value="2"/>
</dbReference>
<dbReference type="SUPFAM" id="SSF100934">
    <property type="entry name" value="Heat shock protein 70kD (HSP70), C-terminal subdomain"/>
    <property type="match status" value="1"/>
</dbReference>
<dbReference type="SUPFAM" id="SSF100920">
    <property type="entry name" value="Heat shock protein 70kD (HSP70), peptide-binding domain"/>
    <property type="match status" value="1"/>
</dbReference>
<dbReference type="PROSITE" id="PS00297">
    <property type="entry name" value="HSP70_1"/>
    <property type="match status" value="1"/>
</dbReference>
<dbReference type="PROSITE" id="PS00329">
    <property type="entry name" value="HSP70_2"/>
    <property type="match status" value="1"/>
</dbReference>
<dbReference type="PROSITE" id="PS01036">
    <property type="entry name" value="HSP70_3"/>
    <property type="match status" value="1"/>
</dbReference>
<protein>
    <recommendedName>
        <fullName evidence="1">Chaperone protein DnaK</fullName>
    </recommendedName>
    <alternativeName>
        <fullName evidence="1">HSP70</fullName>
    </alternativeName>
    <alternativeName>
        <fullName evidence="1">Heat shock 70 kDa protein</fullName>
    </alternativeName>
    <alternativeName>
        <fullName evidence="1">Heat shock protein 70</fullName>
    </alternativeName>
</protein>
<comment type="function">
    <text evidence="1">Acts as a chaperone.</text>
</comment>
<comment type="induction">
    <text evidence="1">By stress conditions e.g. heat shock.</text>
</comment>
<comment type="similarity">
    <text evidence="1">Belongs to the heat shock protein 70 family.</text>
</comment>
<evidence type="ECO:0000255" key="1">
    <source>
        <dbReference type="HAMAP-Rule" id="MF_00332"/>
    </source>
</evidence>
<evidence type="ECO:0000256" key="2">
    <source>
        <dbReference type="SAM" id="MobiDB-lite"/>
    </source>
</evidence>
<accession>A8GMF9</accession>
<proteinExistence type="inferred from homology"/>
<name>DNAK_RICAH</name>
<keyword id="KW-0067">ATP-binding</keyword>
<keyword id="KW-0143">Chaperone</keyword>
<keyword id="KW-0547">Nucleotide-binding</keyword>
<keyword id="KW-0597">Phosphoprotein</keyword>
<keyword id="KW-0346">Stress response</keyword>